<keyword id="KW-0378">Hydrolase</keyword>
<keyword id="KW-0460">Magnesium</keyword>
<keyword id="KW-0464">Manganese</keyword>
<keyword id="KW-0479">Metal-binding</keyword>
<keyword id="KW-0904">Protein phosphatase</keyword>
<keyword id="KW-1185">Reference proteome</keyword>
<accession>Q8RX37</accession>
<accession>Q9LMK9</accession>
<organism>
    <name type="scientific">Arabidopsis thaliana</name>
    <name type="common">Mouse-ear cress</name>
    <dbReference type="NCBI Taxonomy" id="3702"/>
    <lineage>
        <taxon>Eukaryota</taxon>
        <taxon>Viridiplantae</taxon>
        <taxon>Streptophyta</taxon>
        <taxon>Embryophyta</taxon>
        <taxon>Tracheophyta</taxon>
        <taxon>Spermatophyta</taxon>
        <taxon>Magnoliopsida</taxon>
        <taxon>eudicotyledons</taxon>
        <taxon>Gunneridae</taxon>
        <taxon>Pentapetalae</taxon>
        <taxon>rosids</taxon>
        <taxon>malvids</taxon>
        <taxon>Brassicales</taxon>
        <taxon>Brassicaceae</taxon>
        <taxon>Camelineae</taxon>
        <taxon>Arabidopsis</taxon>
    </lineage>
</organism>
<comment type="catalytic activity">
    <reaction>
        <text>O-phospho-L-seryl-[protein] + H2O = L-seryl-[protein] + phosphate</text>
        <dbReference type="Rhea" id="RHEA:20629"/>
        <dbReference type="Rhea" id="RHEA-COMP:9863"/>
        <dbReference type="Rhea" id="RHEA-COMP:11604"/>
        <dbReference type="ChEBI" id="CHEBI:15377"/>
        <dbReference type="ChEBI" id="CHEBI:29999"/>
        <dbReference type="ChEBI" id="CHEBI:43474"/>
        <dbReference type="ChEBI" id="CHEBI:83421"/>
        <dbReference type="EC" id="3.1.3.16"/>
    </reaction>
</comment>
<comment type="catalytic activity">
    <reaction>
        <text>O-phospho-L-threonyl-[protein] + H2O = L-threonyl-[protein] + phosphate</text>
        <dbReference type="Rhea" id="RHEA:47004"/>
        <dbReference type="Rhea" id="RHEA-COMP:11060"/>
        <dbReference type="Rhea" id="RHEA-COMP:11605"/>
        <dbReference type="ChEBI" id="CHEBI:15377"/>
        <dbReference type="ChEBI" id="CHEBI:30013"/>
        <dbReference type="ChEBI" id="CHEBI:43474"/>
        <dbReference type="ChEBI" id="CHEBI:61977"/>
        <dbReference type="EC" id="3.1.3.16"/>
    </reaction>
</comment>
<comment type="cofactor">
    <cofactor evidence="1">
        <name>Mg(2+)</name>
        <dbReference type="ChEBI" id="CHEBI:18420"/>
    </cofactor>
    <cofactor evidence="1">
        <name>Mn(2+)</name>
        <dbReference type="ChEBI" id="CHEBI:29035"/>
    </cofactor>
    <text evidence="1">Binds 2 magnesium or manganese ions per subunit.</text>
</comment>
<comment type="similarity">
    <text evidence="3">Belongs to the PP2C family.</text>
</comment>
<feature type="chain" id="PRO_0000367936" description="Probable protein phosphatase 2C 2">
    <location>
        <begin position="1"/>
        <end position="380"/>
    </location>
</feature>
<feature type="domain" description="PPM-type phosphatase" evidence="2">
    <location>
        <begin position="122"/>
        <end position="376"/>
    </location>
</feature>
<feature type="binding site" evidence="1">
    <location>
        <position position="158"/>
    </location>
    <ligand>
        <name>Mn(2+)</name>
        <dbReference type="ChEBI" id="CHEBI:29035"/>
        <label>1</label>
    </ligand>
</feature>
<feature type="binding site" evidence="1">
    <location>
        <position position="158"/>
    </location>
    <ligand>
        <name>Mn(2+)</name>
        <dbReference type="ChEBI" id="CHEBI:29035"/>
        <label>2</label>
    </ligand>
</feature>
<feature type="binding site" evidence="1">
    <location>
        <position position="159"/>
    </location>
    <ligand>
        <name>Mn(2+)</name>
        <dbReference type="ChEBI" id="CHEBI:29035"/>
        <label>1</label>
    </ligand>
</feature>
<feature type="binding site" evidence="1">
    <location>
        <position position="321"/>
    </location>
    <ligand>
        <name>Mn(2+)</name>
        <dbReference type="ChEBI" id="CHEBI:29035"/>
        <label>2</label>
    </ligand>
</feature>
<feature type="binding site" evidence="1">
    <location>
        <position position="367"/>
    </location>
    <ligand>
        <name>Mn(2+)</name>
        <dbReference type="ChEBI" id="CHEBI:29035"/>
        <label>2</label>
    </ligand>
</feature>
<reference key="1">
    <citation type="journal article" date="2000" name="Nature">
        <title>Sequence and analysis of chromosome 1 of the plant Arabidopsis thaliana.</title>
        <authorList>
            <person name="Theologis A."/>
            <person name="Ecker J.R."/>
            <person name="Palm C.J."/>
            <person name="Federspiel N.A."/>
            <person name="Kaul S."/>
            <person name="White O."/>
            <person name="Alonso J."/>
            <person name="Altafi H."/>
            <person name="Araujo R."/>
            <person name="Bowman C.L."/>
            <person name="Brooks S.Y."/>
            <person name="Buehler E."/>
            <person name="Chan A."/>
            <person name="Chao Q."/>
            <person name="Chen H."/>
            <person name="Cheuk R.F."/>
            <person name="Chin C.W."/>
            <person name="Chung M.K."/>
            <person name="Conn L."/>
            <person name="Conway A.B."/>
            <person name="Conway A.R."/>
            <person name="Creasy T.H."/>
            <person name="Dewar K."/>
            <person name="Dunn P."/>
            <person name="Etgu P."/>
            <person name="Feldblyum T.V."/>
            <person name="Feng J.-D."/>
            <person name="Fong B."/>
            <person name="Fujii C.Y."/>
            <person name="Gill J.E."/>
            <person name="Goldsmith A.D."/>
            <person name="Haas B."/>
            <person name="Hansen N.F."/>
            <person name="Hughes B."/>
            <person name="Huizar L."/>
            <person name="Hunter J.L."/>
            <person name="Jenkins J."/>
            <person name="Johnson-Hopson C."/>
            <person name="Khan S."/>
            <person name="Khaykin E."/>
            <person name="Kim C.J."/>
            <person name="Koo H.L."/>
            <person name="Kremenetskaia I."/>
            <person name="Kurtz D.B."/>
            <person name="Kwan A."/>
            <person name="Lam B."/>
            <person name="Langin-Hooper S."/>
            <person name="Lee A."/>
            <person name="Lee J.M."/>
            <person name="Lenz C.A."/>
            <person name="Li J.H."/>
            <person name="Li Y.-P."/>
            <person name="Lin X."/>
            <person name="Liu S.X."/>
            <person name="Liu Z.A."/>
            <person name="Luros J.S."/>
            <person name="Maiti R."/>
            <person name="Marziali A."/>
            <person name="Militscher J."/>
            <person name="Miranda M."/>
            <person name="Nguyen M."/>
            <person name="Nierman W.C."/>
            <person name="Osborne B.I."/>
            <person name="Pai G."/>
            <person name="Peterson J."/>
            <person name="Pham P.K."/>
            <person name="Rizzo M."/>
            <person name="Rooney T."/>
            <person name="Rowley D."/>
            <person name="Sakano H."/>
            <person name="Salzberg S.L."/>
            <person name="Schwartz J.R."/>
            <person name="Shinn P."/>
            <person name="Southwick A.M."/>
            <person name="Sun H."/>
            <person name="Tallon L.J."/>
            <person name="Tambunga G."/>
            <person name="Toriumi M.J."/>
            <person name="Town C.D."/>
            <person name="Utterback T."/>
            <person name="Van Aken S."/>
            <person name="Vaysberg M."/>
            <person name="Vysotskaia V.S."/>
            <person name="Walker M."/>
            <person name="Wu D."/>
            <person name="Yu G."/>
            <person name="Fraser C.M."/>
            <person name="Venter J.C."/>
            <person name="Davis R.W."/>
        </authorList>
    </citation>
    <scope>NUCLEOTIDE SEQUENCE [LARGE SCALE GENOMIC DNA]</scope>
    <source>
        <strain>cv. Columbia</strain>
    </source>
</reference>
<reference key="2">
    <citation type="journal article" date="2017" name="Plant J.">
        <title>Araport11: a complete reannotation of the Arabidopsis thaliana reference genome.</title>
        <authorList>
            <person name="Cheng C.Y."/>
            <person name="Krishnakumar V."/>
            <person name="Chan A.P."/>
            <person name="Thibaud-Nissen F."/>
            <person name="Schobel S."/>
            <person name="Town C.D."/>
        </authorList>
    </citation>
    <scope>GENOME REANNOTATION</scope>
    <source>
        <strain>cv. Columbia</strain>
    </source>
</reference>
<reference key="3">
    <citation type="journal article" date="2003" name="Science">
        <title>Empirical analysis of transcriptional activity in the Arabidopsis genome.</title>
        <authorList>
            <person name="Yamada K."/>
            <person name="Lim J."/>
            <person name="Dale J.M."/>
            <person name="Chen H."/>
            <person name="Shinn P."/>
            <person name="Palm C.J."/>
            <person name="Southwick A.M."/>
            <person name="Wu H.C."/>
            <person name="Kim C.J."/>
            <person name="Nguyen M."/>
            <person name="Pham P.K."/>
            <person name="Cheuk R.F."/>
            <person name="Karlin-Newmann G."/>
            <person name="Liu S.X."/>
            <person name="Lam B."/>
            <person name="Sakano H."/>
            <person name="Wu T."/>
            <person name="Yu G."/>
            <person name="Miranda M."/>
            <person name="Quach H.L."/>
            <person name="Tripp M."/>
            <person name="Chang C.H."/>
            <person name="Lee J.M."/>
            <person name="Toriumi M.J."/>
            <person name="Chan M.M."/>
            <person name="Tang C.C."/>
            <person name="Onodera C.S."/>
            <person name="Deng J.M."/>
            <person name="Akiyama K."/>
            <person name="Ansari Y."/>
            <person name="Arakawa T."/>
            <person name="Banh J."/>
            <person name="Banno F."/>
            <person name="Bowser L."/>
            <person name="Brooks S.Y."/>
            <person name="Carninci P."/>
            <person name="Chao Q."/>
            <person name="Choy N."/>
            <person name="Enju A."/>
            <person name="Goldsmith A.D."/>
            <person name="Gurjal M."/>
            <person name="Hansen N.F."/>
            <person name="Hayashizaki Y."/>
            <person name="Johnson-Hopson C."/>
            <person name="Hsuan V.W."/>
            <person name="Iida K."/>
            <person name="Karnes M."/>
            <person name="Khan S."/>
            <person name="Koesema E."/>
            <person name="Ishida J."/>
            <person name="Jiang P.X."/>
            <person name="Jones T."/>
            <person name="Kawai J."/>
            <person name="Kamiya A."/>
            <person name="Meyers C."/>
            <person name="Nakajima M."/>
            <person name="Narusaka M."/>
            <person name="Seki M."/>
            <person name="Sakurai T."/>
            <person name="Satou M."/>
            <person name="Tamse R."/>
            <person name="Vaysberg M."/>
            <person name="Wallender E.K."/>
            <person name="Wong C."/>
            <person name="Yamamura Y."/>
            <person name="Yuan S."/>
            <person name="Shinozaki K."/>
            <person name="Davis R.W."/>
            <person name="Theologis A."/>
            <person name="Ecker J.R."/>
        </authorList>
    </citation>
    <scope>NUCLEOTIDE SEQUENCE [LARGE SCALE MRNA]</scope>
    <source>
        <strain>cv. Columbia</strain>
    </source>
</reference>
<reference key="4">
    <citation type="journal article" date="2008" name="BMC Genomics">
        <title>Genome-wide and expression analysis of protein phosphatase 2C in rice and Arabidopsis.</title>
        <authorList>
            <person name="Xue T."/>
            <person name="Wang D."/>
            <person name="Zhang S."/>
            <person name="Ehlting J."/>
            <person name="Ni F."/>
            <person name="Jacab S."/>
            <person name="Zheng C."/>
            <person name="Zhong Y."/>
        </authorList>
    </citation>
    <scope>GENE FAMILY</scope>
    <scope>NOMENCLATURE</scope>
</reference>
<proteinExistence type="evidence at transcript level"/>
<protein>
    <recommendedName>
        <fullName>Probable protein phosphatase 2C 2</fullName>
        <shortName>AtPP2C02</shortName>
        <ecNumber>3.1.3.16</ecNumber>
    </recommendedName>
    <alternativeName>
        <fullName>Protein phosphatase AP2C2</fullName>
    </alternativeName>
</protein>
<dbReference type="EC" id="3.1.3.16"/>
<dbReference type="EMBL" id="AC067971">
    <property type="protein sequence ID" value="AAF82204.1"/>
    <property type="molecule type" value="Genomic_DNA"/>
</dbReference>
<dbReference type="EMBL" id="CP002684">
    <property type="protein sequence ID" value="AEE28084.1"/>
    <property type="molecule type" value="Genomic_DNA"/>
</dbReference>
<dbReference type="EMBL" id="AY090917">
    <property type="protein sequence ID" value="AAM13912.1"/>
    <property type="molecule type" value="mRNA"/>
</dbReference>
<dbReference type="PIR" id="F86206">
    <property type="entry name" value="F86206"/>
</dbReference>
<dbReference type="RefSeq" id="NP_172196.1">
    <property type="nucleotide sequence ID" value="NM_100590.4"/>
</dbReference>
<dbReference type="SMR" id="Q8RX37"/>
<dbReference type="BioGRID" id="22468">
    <property type="interactions" value="9"/>
</dbReference>
<dbReference type="FunCoup" id="Q8RX37">
    <property type="interactions" value="44"/>
</dbReference>
<dbReference type="IntAct" id="Q8RX37">
    <property type="interactions" value="9"/>
</dbReference>
<dbReference type="STRING" id="3702.Q8RX37"/>
<dbReference type="GlyGen" id="Q8RX37">
    <property type="glycosylation" value="1 site"/>
</dbReference>
<dbReference type="PaxDb" id="3702-AT1G07160.1"/>
<dbReference type="EnsemblPlants" id="AT1G07160.1">
    <property type="protein sequence ID" value="AT1G07160.1"/>
    <property type="gene ID" value="AT1G07160"/>
</dbReference>
<dbReference type="GeneID" id="837227"/>
<dbReference type="Gramene" id="AT1G07160.1">
    <property type="protein sequence ID" value="AT1G07160.1"/>
    <property type="gene ID" value="AT1G07160"/>
</dbReference>
<dbReference type="KEGG" id="ath:AT1G07160"/>
<dbReference type="Araport" id="AT1G07160"/>
<dbReference type="TAIR" id="AT1G07160"/>
<dbReference type="eggNOG" id="KOG0698">
    <property type="taxonomic scope" value="Eukaryota"/>
</dbReference>
<dbReference type="HOGENOM" id="CLU_013173_5_1_1"/>
<dbReference type="InParanoid" id="Q8RX37"/>
<dbReference type="OMA" id="CINNDKP"/>
<dbReference type="PhylomeDB" id="Q8RX37"/>
<dbReference type="PRO" id="PR:Q8RX37"/>
<dbReference type="Proteomes" id="UP000006548">
    <property type="component" value="Chromosome 1"/>
</dbReference>
<dbReference type="ExpressionAtlas" id="Q8RX37">
    <property type="expression patterns" value="baseline and differential"/>
</dbReference>
<dbReference type="GO" id="GO:0046872">
    <property type="term" value="F:metal ion binding"/>
    <property type="evidence" value="ECO:0007669"/>
    <property type="project" value="UniProtKB-KW"/>
</dbReference>
<dbReference type="GO" id="GO:0004722">
    <property type="term" value="F:protein serine/threonine phosphatase activity"/>
    <property type="evidence" value="ECO:0007669"/>
    <property type="project" value="UniProtKB-EC"/>
</dbReference>
<dbReference type="CDD" id="cd00143">
    <property type="entry name" value="PP2Cc"/>
    <property type="match status" value="1"/>
</dbReference>
<dbReference type="FunFam" id="3.60.40.10:FF:000044">
    <property type="entry name" value="probable protein phosphatase 2C 25"/>
    <property type="match status" value="1"/>
</dbReference>
<dbReference type="Gene3D" id="3.60.40.10">
    <property type="entry name" value="PPM-type phosphatase domain"/>
    <property type="match status" value="1"/>
</dbReference>
<dbReference type="InterPro" id="IPR015655">
    <property type="entry name" value="PP2C"/>
</dbReference>
<dbReference type="InterPro" id="IPR000222">
    <property type="entry name" value="PP2C_BS"/>
</dbReference>
<dbReference type="InterPro" id="IPR036457">
    <property type="entry name" value="PPM-type-like_dom_sf"/>
</dbReference>
<dbReference type="InterPro" id="IPR001932">
    <property type="entry name" value="PPM-type_phosphatase-like_dom"/>
</dbReference>
<dbReference type="PANTHER" id="PTHR47992">
    <property type="entry name" value="PROTEIN PHOSPHATASE"/>
    <property type="match status" value="1"/>
</dbReference>
<dbReference type="Pfam" id="PF00481">
    <property type="entry name" value="PP2C"/>
    <property type="match status" value="1"/>
</dbReference>
<dbReference type="SMART" id="SM00332">
    <property type="entry name" value="PP2Cc"/>
    <property type="match status" value="1"/>
</dbReference>
<dbReference type="SUPFAM" id="SSF81606">
    <property type="entry name" value="PP2C-like"/>
    <property type="match status" value="1"/>
</dbReference>
<dbReference type="PROSITE" id="PS01032">
    <property type="entry name" value="PPM_1"/>
    <property type="match status" value="1"/>
</dbReference>
<dbReference type="PROSITE" id="PS51746">
    <property type="entry name" value="PPM_2"/>
    <property type="match status" value="1"/>
</dbReference>
<name>P2C02_ARATH</name>
<sequence length="380" mass="40709">MSSSVAVCNSPVFSPSSSLFCNKPLNTSPAHETLTLSLSHLNPPVSSTSPSAASPTSPFCLRLLKPPAKLGFGSDSGPGSILKRKRPTTLDIPVAPVGIAAPISNADTPREESRAVEREGDGYSVYCKRGKREAMEDRFSAITNLQGDPKQAIFGVYDGHGGPTAAEFAAKNLCSNILGEIVGGRNESKIEEAVKRGYLATDSEFLKEKNVKGGSCCVTALISDGNLVVANAGDCRAVLSVGGFAEALTSDHRPSRDDERNRIESSGGYVDTFNSVWRIQGSLAVSRGIGDAHLKQWIISEPEINILRINPQHEFLILASDGLWDKVSNQEAVDIARPFCKGTDQKRKPLLACKKLVDLSVSRGSLDDISVMLIQLCHLF</sequence>
<gene>
    <name type="ordered locus">At1g07160</name>
    <name type="ORF">F10K1.13</name>
</gene>
<evidence type="ECO:0000250" key="1"/>
<evidence type="ECO:0000255" key="2">
    <source>
        <dbReference type="PROSITE-ProRule" id="PRU01082"/>
    </source>
</evidence>
<evidence type="ECO:0000305" key="3"/>